<sequence length="240" mass="26172">MQAKIKNKRVLVKFSGEALAGDNQFGIDIHVLDHIAKEIKSLVENDIEVGIVIGGGNIIRGVSAAQGGIIRRTSGDYMGMLATVINAVAMQEALEHIGLDTRVQSAIEIKEICESYIYRKAIRHLEKGRVVIFGAGTGNPFFTTDTAATLRAIEIGSDLIIKATKVDGIYDKDPNKFKDAKKLDTLSYNDALIGDIEVMDDTAISLAKDNKLPIVVCNMFKKGNLLQVIKHQQGVFSMVK</sequence>
<organism>
    <name type="scientific">Helicobacter pylori (strain ATCC 700392 / 26695)</name>
    <name type="common">Campylobacter pylori</name>
    <dbReference type="NCBI Taxonomy" id="85962"/>
    <lineage>
        <taxon>Bacteria</taxon>
        <taxon>Pseudomonadati</taxon>
        <taxon>Campylobacterota</taxon>
        <taxon>Epsilonproteobacteria</taxon>
        <taxon>Campylobacterales</taxon>
        <taxon>Helicobacteraceae</taxon>
        <taxon>Helicobacter</taxon>
    </lineage>
</organism>
<evidence type="ECO:0000255" key="1">
    <source>
        <dbReference type="HAMAP-Rule" id="MF_01220"/>
    </source>
</evidence>
<evidence type="ECO:0007829" key="2">
    <source>
        <dbReference type="PDB" id="4A7W"/>
    </source>
</evidence>
<evidence type="ECO:0007829" key="3">
    <source>
        <dbReference type="PDB" id="4A7X"/>
    </source>
</evidence>
<protein>
    <recommendedName>
        <fullName evidence="1">Uridylate kinase</fullName>
        <shortName evidence="1">UK</shortName>
        <ecNumber evidence="1">2.7.4.22</ecNumber>
    </recommendedName>
    <alternativeName>
        <fullName evidence="1">Uridine monophosphate kinase</fullName>
        <shortName evidence="1">UMP kinase</shortName>
        <shortName evidence="1">UMPK</shortName>
    </alternativeName>
</protein>
<gene>
    <name evidence="1" type="primary">pyrH</name>
    <name type="ordered locus">HP_0777</name>
</gene>
<dbReference type="EC" id="2.7.4.22" evidence="1"/>
<dbReference type="EMBL" id="AE000511">
    <property type="protein sequence ID" value="AAD07823.1"/>
    <property type="molecule type" value="Genomic_DNA"/>
</dbReference>
<dbReference type="PIR" id="A64617">
    <property type="entry name" value="A64617"/>
</dbReference>
<dbReference type="RefSeq" id="NP_207570.1">
    <property type="nucleotide sequence ID" value="NC_000915.1"/>
</dbReference>
<dbReference type="RefSeq" id="WP_001148056.1">
    <property type="nucleotide sequence ID" value="NC_018939.1"/>
</dbReference>
<dbReference type="PDB" id="4A7W">
    <property type="method" value="X-ray"/>
    <property type="resolution" value="1.80 A"/>
    <property type="chains" value="A/B=1-240"/>
</dbReference>
<dbReference type="PDB" id="4A7X">
    <property type="method" value="X-ray"/>
    <property type="resolution" value="2.49 A"/>
    <property type="chains" value="A/B/C/D/E/F=1-240"/>
</dbReference>
<dbReference type="PDBsum" id="4A7W"/>
<dbReference type="PDBsum" id="4A7X"/>
<dbReference type="SMR" id="P56106"/>
<dbReference type="FunCoup" id="P56106">
    <property type="interactions" value="431"/>
</dbReference>
<dbReference type="IntAct" id="P56106">
    <property type="interactions" value="3"/>
</dbReference>
<dbReference type="STRING" id="85962.HP_0777"/>
<dbReference type="PaxDb" id="85962-C694_03990"/>
<dbReference type="DNASU" id="900266"/>
<dbReference type="EnsemblBacteria" id="AAD07823">
    <property type="protein sequence ID" value="AAD07823"/>
    <property type="gene ID" value="HP_0777"/>
</dbReference>
<dbReference type="KEGG" id="heo:C694_03990"/>
<dbReference type="KEGG" id="hpy:HP_0777"/>
<dbReference type="PATRIC" id="fig|85962.47.peg.829"/>
<dbReference type="eggNOG" id="COG0528">
    <property type="taxonomic scope" value="Bacteria"/>
</dbReference>
<dbReference type="InParanoid" id="P56106"/>
<dbReference type="OrthoDB" id="9807458at2"/>
<dbReference type="PhylomeDB" id="P56106"/>
<dbReference type="BRENDA" id="2.7.4.22">
    <property type="organism ID" value="2604"/>
</dbReference>
<dbReference type="UniPathway" id="UPA00159">
    <property type="reaction ID" value="UER00275"/>
</dbReference>
<dbReference type="EvolutionaryTrace" id="P56106"/>
<dbReference type="Proteomes" id="UP000000429">
    <property type="component" value="Chromosome"/>
</dbReference>
<dbReference type="GO" id="GO:0005829">
    <property type="term" value="C:cytosol"/>
    <property type="evidence" value="ECO:0000318"/>
    <property type="project" value="GO_Central"/>
</dbReference>
<dbReference type="GO" id="GO:0005524">
    <property type="term" value="F:ATP binding"/>
    <property type="evidence" value="ECO:0007669"/>
    <property type="project" value="UniProtKB-KW"/>
</dbReference>
<dbReference type="GO" id="GO:0033862">
    <property type="term" value="F:UMP kinase activity"/>
    <property type="evidence" value="ECO:0000318"/>
    <property type="project" value="GO_Central"/>
</dbReference>
<dbReference type="GO" id="GO:0044210">
    <property type="term" value="P:'de novo' CTP biosynthetic process"/>
    <property type="evidence" value="ECO:0007669"/>
    <property type="project" value="UniProtKB-UniRule"/>
</dbReference>
<dbReference type="GO" id="GO:0006225">
    <property type="term" value="P:UDP biosynthetic process"/>
    <property type="evidence" value="ECO:0000318"/>
    <property type="project" value="GO_Central"/>
</dbReference>
<dbReference type="CDD" id="cd04254">
    <property type="entry name" value="AAK_UMPK-PyrH-Ec"/>
    <property type="match status" value="1"/>
</dbReference>
<dbReference type="FunFam" id="3.40.1160.10:FF:000001">
    <property type="entry name" value="Uridylate kinase"/>
    <property type="match status" value="1"/>
</dbReference>
<dbReference type="Gene3D" id="3.40.1160.10">
    <property type="entry name" value="Acetylglutamate kinase-like"/>
    <property type="match status" value="1"/>
</dbReference>
<dbReference type="HAMAP" id="MF_01220_B">
    <property type="entry name" value="PyrH_B"/>
    <property type="match status" value="1"/>
</dbReference>
<dbReference type="InterPro" id="IPR036393">
    <property type="entry name" value="AceGlu_kinase-like_sf"/>
</dbReference>
<dbReference type="InterPro" id="IPR001048">
    <property type="entry name" value="Asp/Glu/Uridylate_kinase"/>
</dbReference>
<dbReference type="InterPro" id="IPR011817">
    <property type="entry name" value="Uridylate_kinase"/>
</dbReference>
<dbReference type="InterPro" id="IPR015963">
    <property type="entry name" value="Uridylate_kinase_bac"/>
</dbReference>
<dbReference type="NCBIfam" id="TIGR02075">
    <property type="entry name" value="pyrH_bact"/>
    <property type="match status" value="1"/>
</dbReference>
<dbReference type="PANTHER" id="PTHR42833">
    <property type="entry name" value="URIDYLATE KINASE"/>
    <property type="match status" value="1"/>
</dbReference>
<dbReference type="PANTHER" id="PTHR42833:SF4">
    <property type="entry name" value="URIDYLATE KINASE PUMPKIN, CHLOROPLASTIC"/>
    <property type="match status" value="1"/>
</dbReference>
<dbReference type="Pfam" id="PF00696">
    <property type="entry name" value="AA_kinase"/>
    <property type="match status" value="1"/>
</dbReference>
<dbReference type="PIRSF" id="PIRSF005650">
    <property type="entry name" value="Uridylate_kin"/>
    <property type="match status" value="1"/>
</dbReference>
<dbReference type="SUPFAM" id="SSF53633">
    <property type="entry name" value="Carbamate kinase-like"/>
    <property type="match status" value="1"/>
</dbReference>
<comment type="function">
    <text evidence="1">Catalyzes the reversible phosphorylation of UMP to UDP.</text>
</comment>
<comment type="catalytic activity">
    <reaction evidence="1">
        <text>UMP + ATP = UDP + ADP</text>
        <dbReference type="Rhea" id="RHEA:24400"/>
        <dbReference type="ChEBI" id="CHEBI:30616"/>
        <dbReference type="ChEBI" id="CHEBI:57865"/>
        <dbReference type="ChEBI" id="CHEBI:58223"/>
        <dbReference type="ChEBI" id="CHEBI:456216"/>
        <dbReference type="EC" id="2.7.4.22"/>
    </reaction>
</comment>
<comment type="activity regulation">
    <text evidence="1">Inhibited by UTP.</text>
</comment>
<comment type="pathway">
    <text evidence="1">Pyrimidine metabolism; CTP biosynthesis via de novo pathway; UDP from UMP (UMPK route): step 1/1.</text>
</comment>
<comment type="subunit">
    <text evidence="1">Homohexamer.</text>
</comment>
<comment type="subcellular location">
    <subcellularLocation>
        <location evidence="1">Cytoplasm</location>
    </subcellularLocation>
</comment>
<comment type="similarity">
    <text evidence="1">Belongs to the UMP kinase family.</text>
</comment>
<proteinExistence type="evidence at protein level"/>
<name>PYRH_HELPY</name>
<reference key="1">
    <citation type="journal article" date="1997" name="Nature">
        <title>The complete genome sequence of the gastric pathogen Helicobacter pylori.</title>
        <authorList>
            <person name="Tomb J.-F."/>
            <person name="White O."/>
            <person name="Kerlavage A.R."/>
            <person name="Clayton R.A."/>
            <person name="Sutton G.G."/>
            <person name="Fleischmann R.D."/>
            <person name="Ketchum K.A."/>
            <person name="Klenk H.-P."/>
            <person name="Gill S.R."/>
            <person name="Dougherty B.A."/>
            <person name="Nelson K.E."/>
            <person name="Quackenbush J."/>
            <person name="Zhou L."/>
            <person name="Kirkness E.F."/>
            <person name="Peterson S.N."/>
            <person name="Loftus B.J."/>
            <person name="Richardson D.L."/>
            <person name="Dodson R.J."/>
            <person name="Khalak H.G."/>
            <person name="Glodek A."/>
            <person name="McKenney K."/>
            <person name="FitzGerald L.M."/>
            <person name="Lee N."/>
            <person name="Adams M.D."/>
            <person name="Hickey E.K."/>
            <person name="Berg D.E."/>
            <person name="Gocayne J.D."/>
            <person name="Utterback T.R."/>
            <person name="Peterson J.D."/>
            <person name="Kelley J.M."/>
            <person name="Cotton M.D."/>
            <person name="Weidman J.F."/>
            <person name="Fujii C."/>
            <person name="Bowman C."/>
            <person name="Watthey L."/>
            <person name="Wallin E."/>
            <person name="Hayes W.S."/>
            <person name="Borodovsky M."/>
            <person name="Karp P.D."/>
            <person name="Smith H.O."/>
            <person name="Fraser C.M."/>
            <person name="Venter J.C."/>
        </authorList>
    </citation>
    <scope>NUCLEOTIDE SEQUENCE [LARGE SCALE GENOMIC DNA]</scope>
    <source>
        <strain>ATCC 700392 / 26695</strain>
    </source>
</reference>
<accession>P56106</accession>
<feature type="chain" id="PRO_0000143848" description="Uridylate kinase">
    <location>
        <begin position="1"/>
        <end position="240"/>
    </location>
</feature>
<feature type="binding site" evidence="1">
    <location>
        <begin position="13"/>
        <end position="16"/>
    </location>
    <ligand>
        <name>ATP</name>
        <dbReference type="ChEBI" id="CHEBI:30616"/>
    </ligand>
</feature>
<feature type="binding site" evidence="1">
    <location>
        <position position="55"/>
    </location>
    <ligand>
        <name>UMP</name>
        <dbReference type="ChEBI" id="CHEBI:57865"/>
    </ligand>
</feature>
<feature type="binding site" evidence="1">
    <location>
        <position position="56"/>
    </location>
    <ligand>
        <name>ATP</name>
        <dbReference type="ChEBI" id="CHEBI:30616"/>
    </ligand>
</feature>
<feature type="binding site" evidence="1">
    <location>
        <position position="60"/>
    </location>
    <ligand>
        <name>ATP</name>
        <dbReference type="ChEBI" id="CHEBI:30616"/>
    </ligand>
</feature>
<feature type="binding site" evidence="1">
    <location>
        <position position="76"/>
    </location>
    <ligand>
        <name>UMP</name>
        <dbReference type="ChEBI" id="CHEBI:57865"/>
    </ligand>
</feature>
<feature type="binding site" evidence="1">
    <location>
        <begin position="137"/>
        <end position="144"/>
    </location>
    <ligand>
        <name>UMP</name>
        <dbReference type="ChEBI" id="CHEBI:57865"/>
    </ligand>
</feature>
<feature type="binding site" evidence="1">
    <location>
        <position position="164"/>
    </location>
    <ligand>
        <name>ATP</name>
        <dbReference type="ChEBI" id="CHEBI:30616"/>
    </ligand>
</feature>
<feature type="binding site" evidence="1">
    <location>
        <position position="170"/>
    </location>
    <ligand>
        <name>ATP</name>
        <dbReference type="ChEBI" id="CHEBI:30616"/>
    </ligand>
</feature>
<feature type="binding site" evidence="1">
    <location>
        <position position="173"/>
    </location>
    <ligand>
        <name>ATP</name>
        <dbReference type="ChEBI" id="CHEBI:30616"/>
    </ligand>
</feature>
<feature type="strand" evidence="2">
    <location>
        <begin position="9"/>
        <end position="14"/>
    </location>
</feature>
<feature type="helix" evidence="2">
    <location>
        <begin position="16"/>
        <end position="20"/>
    </location>
</feature>
<feature type="strand" evidence="2">
    <location>
        <begin position="23"/>
        <end position="26"/>
    </location>
</feature>
<feature type="helix" evidence="2">
    <location>
        <begin position="29"/>
        <end position="44"/>
    </location>
</feature>
<feature type="strand" evidence="2">
    <location>
        <begin position="48"/>
        <end position="53"/>
    </location>
</feature>
<feature type="turn" evidence="2">
    <location>
        <begin position="56"/>
        <end position="58"/>
    </location>
</feature>
<feature type="helix" evidence="3">
    <location>
        <begin position="61"/>
        <end position="64"/>
    </location>
</feature>
<feature type="strand" evidence="3">
    <location>
        <begin position="68"/>
        <end position="70"/>
    </location>
</feature>
<feature type="helix" evidence="2">
    <location>
        <begin position="72"/>
        <end position="96"/>
    </location>
</feature>
<feature type="strand" evidence="2">
    <location>
        <begin position="101"/>
        <end position="107"/>
    </location>
</feature>
<feature type="turn" evidence="2">
    <location>
        <begin position="110"/>
        <end position="112"/>
    </location>
</feature>
<feature type="strand" evidence="2">
    <location>
        <begin position="113"/>
        <end position="115"/>
    </location>
</feature>
<feature type="helix" evidence="2">
    <location>
        <begin position="118"/>
        <end position="126"/>
    </location>
</feature>
<feature type="strand" evidence="2">
    <location>
        <begin position="130"/>
        <end position="135"/>
    </location>
</feature>
<feature type="helix" evidence="2">
    <location>
        <begin position="144"/>
        <end position="154"/>
    </location>
</feature>
<feature type="strand" evidence="2">
    <location>
        <begin position="158"/>
        <end position="172"/>
    </location>
</feature>
<feature type="turn" evidence="2">
    <location>
        <begin position="174"/>
        <end position="176"/>
    </location>
</feature>
<feature type="strand" evidence="2">
    <location>
        <begin position="182"/>
        <end position="187"/>
    </location>
</feature>
<feature type="helix" evidence="2">
    <location>
        <begin position="188"/>
        <end position="193"/>
    </location>
</feature>
<feature type="helix" evidence="2">
    <location>
        <begin position="201"/>
        <end position="209"/>
    </location>
</feature>
<feature type="strand" evidence="2">
    <location>
        <begin position="214"/>
        <end position="221"/>
    </location>
</feature>
<feature type="helix" evidence="2">
    <location>
        <begin position="224"/>
        <end position="231"/>
    </location>
</feature>
<feature type="strand" evidence="2">
    <location>
        <begin position="237"/>
        <end position="240"/>
    </location>
</feature>
<keyword id="KW-0002">3D-structure</keyword>
<keyword id="KW-0067">ATP-binding</keyword>
<keyword id="KW-0963">Cytoplasm</keyword>
<keyword id="KW-0418">Kinase</keyword>
<keyword id="KW-0547">Nucleotide-binding</keyword>
<keyword id="KW-0665">Pyrimidine biosynthesis</keyword>
<keyword id="KW-1185">Reference proteome</keyword>
<keyword id="KW-0808">Transferase</keyword>